<keyword id="KW-0156">Chromatin regulator</keyword>
<keyword id="KW-0963">Cytoplasm</keyword>
<keyword id="KW-0539">Nucleus</keyword>
<keyword id="KW-1185">Reference proteome</keyword>
<gene>
    <name type="primary">tdrd3</name>
</gene>
<dbReference type="EMBL" id="BC070694">
    <property type="protein sequence ID" value="AAH70694.1"/>
    <property type="molecule type" value="mRNA"/>
</dbReference>
<dbReference type="RefSeq" id="NP_001084774.1">
    <property type="nucleotide sequence ID" value="NM_001091305.1"/>
</dbReference>
<dbReference type="SMR" id="Q6NRP6"/>
<dbReference type="BioGRID" id="101176">
    <property type="interactions" value="1"/>
</dbReference>
<dbReference type="IntAct" id="Q6NRP6">
    <property type="interactions" value="1"/>
</dbReference>
<dbReference type="DNASU" id="431810"/>
<dbReference type="GeneID" id="431810"/>
<dbReference type="KEGG" id="xla:431810"/>
<dbReference type="AGR" id="Xenbase:XB-GENE-949081"/>
<dbReference type="CTD" id="431810"/>
<dbReference type="Xenbase" id="XB-GENE-949081">
    <property type="gene designation" value="tdrd3.L"/>
</dbReference>
<dbReference type="OrthoDB" id="434939at2759"/>
<dbReference type="Proteomes" id="UP000186698">
    <property type="component" value="Chromosome 2L"/>
</dbReference>
<dbReference type="Bgee" id="431810">
    <property type="expression patterns" value="Expressed in lung and 19 other cell types or tissues"/>
</dbReference>
<dbReference type="GO" id="GO:0005737">
    <property type="term" value="C:cytoplasm"/>
    <property type="evidence" value="ECO:0007669"/>
    <property type="project" value="UniProtKB-SubCell"/>
</dbReference>
<dbReference type="GO" id="GO:0005634">
    <property type="term" value="C:nucleus"/>
    <property type="evidence" value="ECO:0000250"/>
    <property type="project" value="UniProtKB"/>
</dbReference>
<dbReference type="GO" id="GO:0003682">
    <property type="term" value="F:chromatin binding"/>
    <property type="evidence" value="ECO:0000250"/>
    <property type="project" value="UniProtKB"/>
</dbReference>
<dbReference type="GO" id="GO:0140006">
    <property type="term" value="F:histone H3 reader activity"/>
    <property type="evidence" value="ECO:0000250"/>
    <property type="project" value="UniProtKB"/>
</dbReference>
<dbReference type="GO" id="GO:0003713">
    <property type="term" value="F:transcription coactivator activity"/>
    <property type="evidence" value="ECO:0000250"/>
    <property type="project" value="UniProtKB"/>
</dbReference>
<dbReference type="CDD" id="cd20413">
    <property type="entry name" value="Tudor_TDRD3"/>
    <property type="match status" value="1"/>
</dbReference>
<dbReference type="CDD" id="cd14282">
    <property type="entry name" value="UBA_TDRD3"/>
    <property type="match status" value="1"/>
</dbReference>
<dbReference type="FunFam" id="1.10.8.10:FF:000038">
    <property type="entry name" value="tudor domain-containing protein 3 isoform X1"/>
    <property type="match status" value="1"/>
</dbReference>
<dbReference type="FunFam" id="2.30.30.140:FF:000046">
    <property type="entry name" value="tudor domain-containing protein 3 isoform X1"/>
    <property type="match status" value="1"/>
</dbReference>
<dbReference type="Gene3D" id="2.30.30.140">
    <property type="match status" value="1"/>
</dbReference>
<dbReference type="Gene3D" id="1.10.8.10">
    <property type="entry name" value="DNA helicase RuvA subunit, C-terminal domain"/>
    <property type="match status" value="1"/>
</dbReference>
<dbReference type="Gene3D" id="2.40.50.770">
    <property type="entry name" value="RecQ-mediated genome instability protein Rmi1, C-terminal domain"/>
    <property type="match status" value="1"/>
</dbReference>
<dbReference type="InterPro" id="IPR042470">
    <property type="entry name" value="RMI1_N_C_sf"/>
</dbReference>
<dbReference type="InterPro" id="IPR013894">
    <property type="entry name" value="RMI1_OB"/>
</dbReference>
<dbReference type="InterPro" id="IPR002999">
    <property type="entry name" value="Tudor"/>
</dbReference>
<dbReference type="InterPro" id="IPR047379">
    <property type="entry name" value="Tudor_TDRD3"/>
</dbReference>
<dbReference type="InterPro" id="IPR015940">
    <property type="entry name" value="UBA"/>
</dbReference>
<dbReference type="InterPro" id="IPR009060">
    <property type="entry name" value="UBA-like_sf"/>
</dbReference>
<dbReference type="InterPro" id="IPR041915">
    <property type="entry name" value="UBA_TDRD3"/>
</dbReference>
<dbReference type="PANTHER" id="PTHR13681">
    <property type="entry name" value="SURVIVAL OF MOTOR NEURON-RELATED-SPLICING FACTOR 30-RELATED"/>
    <property type="match status" value="1"/>
</dbReference>
<dbReference type="PANTHER" id="PTHR13681:SF24">
    <property type="entry name" value="TUDOR DOMAIN-CONTAINING PROTEIN 3"/>
    <property type="match status" value="1"/>
</dbReference>
<dbReference type="Pfam" id="PF08585">
    <property type="entry name" value="RMI1_N_C"/>
    <property type="match status" value="1"/>
</dbReference>
<dbReference type="Pfam" id="PF00567">
    <property type="entry name" value="TUDOR"/>
    <property type="match status" value="1"/>
</dbReference>
<dbReference type="Pfam" id="PF22562">
    <property type="entry name" value="UBA_7"/>
    <property type="match status" value="1"/>
</dbReference>
<dbReference type="SMART" id="SM00333">
    <property type="entry name" value="TUDOR"/>
    <property type="match status" value="1"/>
</dbReference>
<dbReference type="SMART" id="SM00165">
    <property type="entry name" value="UBA"/>
    <property type="match status" value="1"/>
</dbReference>
<dbReference type="SUPFAM" id="SSF63748">
    <property type="entry name" value="Tudor/PWWP/MBT"/>
    <property type="match status" value="1"/>
</dbReference>
<dbReference type="SUPFAM" id="SSF46934">
    <property type="entry name" value="UBA-like"/>
    <property type="match status" value="1"/>
</dbReference>
<dbReference type="PROSITE" id="PS50304">
    <property type="entry name" value="TUDOR"/>
    <property type="match status" value="1"/>
</dbReference>
<dbReference type="PROSITE" id="PS50030">
    <property type="entry name" value="UBA"/>
    <property type="match status" value="1"/>
</dbReference>
<feature type="chain" id="PRO_0000367249" description="Tudor domain-containing protein 3">
    <location>
        <begin position="1"/>
        <end position="650"/>
    </location>
</feature>
<feature type="domain" description="UBA" evidence="4">
    <location>
        <begin position="192"/>
        <end position="232"/>
    </location>
</feature>
<feature type="domain" description="Tudor" evidence="3">
    <location>
        <begin position="554"/>
        <end position="614"/>
    </location>
</feature>
<feature type="region of interest" description="Disordered" evidence="5">
    <location>
        <begin position="147"/>
        <end position="169"/>
    </location>
</feature>
<feature type="region of interest" description="Disordered" evidence="5">
    <location>
        <begin position="233"/>
        <end position="271"/>
    </location>
</feature>
<feature type="region of interest" description="Disordered" evidence="5">
    <location>
        <begin position="286"/>
        <end position="406"/>
    </location>
</feature>
<feature type="region of interest" description="Disordered" evidence="5">
    <location>
        <begin position="427"/>
        <end position="447"/>
    </location>
</feature>
<feature type="region of interest" description="Disordered" evidence="5">
    <location>
        <begin position="616"/>
        <end position="650"/>
    </location>
</feature>
<feature type="compositionally biased region" description="Basic and acidic residues" evidence="5">
    <location>
        <begin position="320"/>
        <end position="337"/>
    </location>
</feature>
<feature type="compositionally biased region" description="Basic and acidic residues" evidence="5">
    <location>
        <begin position="366"/>
        <end position="388"/>
    </location>
</feature>
<feature type="compositionally biased region" description="Polar residues" evidence="5">
    <location>
        <begin position="390"/>
        <end position="406"/>
    </location>
</feature>
<feature type="compositionally biased region" description="Basic and acidic residues" evidence="5">
    <location>
        <begin position="622"/>
        <end position="632"/>
    </location>
</feature>
<sequence>MLRVQLTDGHTSCTAVELNHLSKISLNTPPGTKIKLLGTIEVKNGYLLLDDTNTVVLGGEVEHLIEKWELQRSLSKHSRSNIGIEGGPPPFVPFGQRCASVASVDSKELDSRKTLQASSVTKAVGENDEFEKQRTAAIAEVAKSKETKTFGGGGNAGSNLNPGAGGSRNREVFQKEKIIRAEGKSEGVYRELVDEKALRHITEMGFCKDAARQALMDHSNNVEAALNFLLTGSKPKVVQGPPPRGKGKGRGRTRGEEDDELTSARPSAPSTLFDFLESKMGSFSIEDNKSHSQAQSQTHPKALNLEQNGIKDYNQPRQFTRNDTRAPRNEKPPRFQKEIQASRQYEGNGPPKSRGPEKQSSSVAEHWMEDRNKCERGYPRNDRLKDFSHPPSNHQNEGSYRKSCNNPMQSRGIKGGNHTEVKVEFHHQNSTTEGSHQKRGKKDDQRYNSEFYTDRRARTGNNETVASTPNEKCFSANNELSNFQTILIKEGANDLSNGEVDQKARRFGPIKPIGTNLNSTHDDKSKMFSYNNTKKKSGSIKPDKPLEAVYSGFSWRSGDECLALYWEDNKYYRAEVEALHSSGTTAVVKFSDYGNYEEVLLENIRPIQAEAWEEEGEFGDSLDFRRGGDGQPRRSTRPTQQFYQPPRARN</sequence>
<evidence type="ECO:0000250" key="1"/>
<evidence type="ECO:0000250" key="2">
    <source>
        <dbReference type="UniProtKB" id="Q9H7E2"/>
    </source>
</evidence>
<evidence type="ECO:0000255" key="3">
    <source>
        <dbReference type="PROSITE-ProRule" id="PRU00211"/>
    </source>
</evidence>
<evidence type="ECO:0000255" key="4">
    <source>
        <dbReference type="PROSITE-ProRule" id="PRU00212"/>
    </source>
</evidence>
<evidence type="ECO:0000256" key="5">
    <source>
        <dbReference type="SAM" id="MobiDB-lite"/>
    </source>
</evidence>
<protein>
    <recommendedName>
        <fullName>Tudor domain-containing protein 3</fullName>
    </recommendedName>
</protein>
<name>TDRD3_XENLA</name>
<comment type="function">
    <text evidence="2">Scaffolding protein that specifically recognizes and binds dimethylarginine-containing proteins. Plays a role in the regulation of translation of target mRNAs by binding Arg/Gly-rich motifs (GAR) in dimethylarginine-containing proteins. In nucleus, acts as a coactivator: recognizes and binds asymmetric dimethylation on the core histone tails associated with transcriptional activation (H3R17me2a and H4R3me2a) and recruits proteins at these arginine-methylated loci. In cytoplasm, acts as an antiviral factor that participates in the assembly of stress granules together with G3BP1.</text>
</comment>
<comment type="subunit">
    <text evidence="2">Component of mRNA stress granules.</text>
</comment>
<comment type="subcellular location">
    <subcellularLocation>
        <location evidence="2">Cytoplasm</location>
    </subcellularLocation>
    <subcellularLocation>
        <location evidence="2">Nucleus</location>
    </subcellularLocation>
    <text evidence="2">Predominantly cytoplasmic. Associated with actively translating polyribosomes. Component of stress granules.</text>
</comment>
<comment type="domain">
    <text evidence="1">The Tudor domain specifically recognizes and binds asymmetric dimethylation of histone H3 'Arg-17' (H3R17me2a) and histones H4 'Arg-3', 2 tags for epigenetic transcriptional activation.</text>
</comment>
<accession>Q6NRP6</accession>
<reference key="1">
    <citation type="submission" date="2004-05" db="EMBL/GenBank/DDBJ databases">
        <authorList>
            <consortium name="NIH - Xenopus Gene Collection (XGC) project"/>
        </authorList>
    </citation>
    <scope>NUCLEOTIDE SEQUENCE [LARGE SCALE MRNA]</scope>
    <source>
        <tissue>Embryo</tissue>
    </source>
</reference>
<organism>
    <name type="scientific">Xenopus laevis</name>
    <name type="common">African clawed frog</name>
    <dbReference type="NCBI Taxonomy" id="8355"/>
    <lineage>
        <taxon>Eukaryota</taxon>
        <taxon>Metazoa</taxon>
        <taxon>Chordata</taxon>
        <taxon>Craniata</taxon>
        <taxon>Vertebrata</taxon>
        <taxon>Euteleostomi</taxon>
        <taxon>Amphibia</taxon>
        <taxon>Batrachia</taxon>
        <taxon>Anura</taxon>
        <taxon>Pipoidea</taxon>
        <taxon>Pipidae</taxon>
        <taxon>Xenopodinae</taxon>
        <taxon>Xenopus</taxon>
        <taxon>Xenopus</taxon>
    </lineage>
</organism>
<proteinExistence type="evidence at transcript level"/>